<dbReference type="EMBL" id="CM000134">
    <property type="protein sequence ID" value="EAZ09050.1"/>
    <property type="molecule type" value="Genomic_DNA"/>
</dbReference>
<dbReference type="SMR" id="A2Z139"/>
<dbReference type="EnsemblPlants" id="BGIOSGA029788-TA">
    <property type="protein sequence ID" value="BGIOSGA029788-PA"/>
    <property type="gene ID" value="BGIOSGA029788"/>
</dbReference>
<dbReference type="Gramene" id="BGIOSGA029788-TA">
    <property type="protein sequence ID" value="BGIOSGA029788-PA"/>
    <property type="gene ID" value="BGIOSGA029788"/>
</dbReference>
<dbReference type="HOGENOM" id="CLU_138205_0_0_1"/>
<dbReference type="OMA" id="RRMFAIT"/>
<dbReference type="Proteomes" id="UP000007015">
    <property type="component" value="Chromosome 9"/>
</dbReference>
<dbReference type="Gene3D" id="1.20.120.320">
    <property type="entry name" value="Group V grass pollen allergen"/>
    <property type="match status" value="1"/>
</dbReference>
<dbReference type="InterPro" id="IPR035506">
    <property type="entry name" value="Pollen_allergen/Os"/>
</dbReference>
<sequence length="134" mass="13959">MAKAVALLLAAIAASAVLVQVECDAAVEKSFNKALLAPVDKRLDEAAQAINEAADSVVAAAPPAKKDEVEAATWKRRMFAITALGMAQGDEKKVAATSLAYKKAAKAVLDAAPADKFKLMDESFKVAVMQVIAS</sequence>
<accession>A2Z139</accession>
<accession>P83633</accession>
<protein>
    <recommendedName>
        <fullName>Uncharacterized protein OsI_030282</fullName>
    </recommendedName>
    <alternativeName>
        <fullName>Unknown protein AN08 from 2D-PAGE of anther</fullName>
    </alternativeName>
</protein>
<keyword id="KW-0903">Direct protein sequencing</keyword>
<keyword id="KW-1185">Reference proteome</keyword>
<keyword id="KW-0732">Signal</keyword>
<name>Y0282_ORYSI</name>
<organism>
    <name type="scientific">Oryza sativa subsp. indica</name>
    <name type="common">Rice</name>
    <dbReference type="NCBI Taxonomy" id="39946"/>
    <lineage>
        <taxon>Eukaryota</taxon>
        <taxon>Viridiplantae</taxon>
        <taxon>Streptophyta</taxon>
        <taxon>Embryophyta</taxon>
        <taxon>Tracheophyta</taxon>
        <taxon>Spermatophyta</taxon>
        <taxon>Magnoliopsida</taxon>
        <taxon>Liliopsida</taxon>
        <taxon>Poales</taxon>
        <taxon>Poaceae</taxon>
        <taxon>BOP clade</taxon>
        <taxon>Oryzoideae</taxon>
        <taxon>Oryzeae</taxon>
        <taxon>Oryzinae</taxon>
        <taxon>Oryza</taxon>
        <taxon>Oryza sativa</taxon>
    </lineage>
</organism>
<proteinExistence type="evidence at protein level"/>
<feature type="signal peptide" evidence="1">
    <location>
        <begin position="1"/>
        <end position="16"/>
    </location>
</feature>
<feature type="chain" id="PRO_0000308522" description="Uncharacterized protein OsI_030282" evidence="1">
    <location>
        <begin position="17"/>
        <end position="134"/>
    </location>
</feature>
<feature type="sequence conflict" description="In Ref. 2; AA sequence." evidence="4" ref="2">
    <original>I</original>
    <variation>L</variation>
    <location>
        <position position="50"/>
    </location>
</feature>
<gene>
    <name type="ORF">OsI_030282</name>
</gene>
<reference evidence="5" key="1">
    <citation type="journal article" date="2005" name="PLoS Biol.">
        <title>The genomes of Oryza sativa: a history of duplications.</title>
        <authorList>
            <person name="Yu J."/>
            <person name="Wang J."/>
            <person name="Lin W."/>
            <person name="Li S."/>
            <person name="Li H."/>
            <person name="Zhou J."/>
            <person name="Ni P."/>
            <person name="Dong W."/>
            <person name="Hu S."/>
            <person name="Zeng C."/>
            <person name="Zhang J."/>
            <person name="Zhang Y."/>
            <person name="Li R."/>
            <person name="Xu Z."/>
            <person name="Li S."/>
            <person name="Li X."/>
            <person name="Zheng H."/>
            <person name="Cong L."/>
            <person name="Lin L."/>
            <person name="Yin J."/>
            <person name="Geng J."/>
            <person name="Li G."/>
            <person name="Shi J."/>
            <person name="Liu J."/>
            <person name="Lv H."/>
            <person name="Li J."/>
            <person name="Wang J."/>
            <person name="Deng Y."/>
            <person name="Ran L."/>
            <person name="Shi X."/>
            <person name="Wang X."/>
            <person name="Wu Q."/>
            <person name="Li C."/>
            <person name="Ren X."/>
            <person name="Wang J."/>
            <person name="Wang X."/>
            <person name="Li D."/>
            <person name="Liu D."/>
            <person name="Zhang X."/>
            <person name="Ji Z."/>
            <person name="Zhao W."/>
            <person name="Sun Y."/>
            <person name="Zhang Z."/>
            <person name="Bao J."/>
            <person name="Han Y."/>
            <person name="Dong L."/>
            <person name="Ji J."/>
            <person name="Chen P."/>
            <person name="Wu S."/>
            <person name="Liu J."/>
            <person name="Xiao Y."/>
            <person name="Bu D."/>
            <person name="Tan J."/>
            <person name="Yang L."/>
            <person name="Ye C."/>
            <person name="Zhang J."/>
            <person name="Xu J."/>
            <person name="Zhou Y."/>
            <person name="Yu Y."/>
            <person name="Zhang B."/>
            <person name="Zhuang S."/>
            <person name="Wei H."/>
            <person name="Liu B."/>
            <person name="Lei M."/>
            <person name="Yu H."/>
            <person name="Li Y."/>
            <person name="Xu H."/>
            <person name="Wei S."/>
            <person name="He X."/>
            <person name="Fang L."/>
            <person name="Zhang Z."/>
            <person name="Zhang Y."/>
            <person name="Huang X."/>
            <person name="Su Z."/>
            <person name="Tong W."/>
            <person name="Li J."/>
            <person name="Tong Z."/>
            <person name="Li S."/>
            <person name="Ye J."/>
            <person name="Wang L."/>
            <person name="Fang L."/>
            <person name="Lei T."/>
            <person name="Chen C.-S."/>
            <person name="Chen H.-C."/>
            <person name="Xu Z."/>
            <person name="Li H."/>
            <person name="Huang H."/>
            <person name="Zhang F."/>
            <person name="Xu H."/>
            <person name="Li N."/>
            <person name="Zhao C."/>
            <person name="Li S."/>
            <person name="Dong L."/>
            <person name="Huang Y."/>
            <person name="Li L."/>
            <person name="Xi Y."/>
            <person name="Qi Q."/>
            <person name="Li W."/>
            <person name="Zhang B."/>
            <person name="Hu W."/>
            <person name="Zhang Y."/>
            <person name="Tian X."/>
            <person name="Jiao Y."/>
            <person name="Liang X."/>
            <person name="Jin J."/>
            <person name="Gao L."/>
            <person name="Zheng W."/>
            <person name="Hao B."/>
            <person name="Liu S.-M."/>
            <person name="Wang W."/>
            <person name="Yuan L."/>
            <person name="Cao M."/>
            <person name="McDermott J."/>
            <person name="Samudrala R."/>
            <person name="Wang J."/>
            <person name="Wong G.K.-S."/>
            <person name="Yang H."/>
        </authorList>
    </citation>
    <scope>NUCLEOTIDE SEQUENCE [LARGE SCALE GENOMIC DNA]</scope>
    <source>
        <strain evidence="2">cv. 93-11</strain>
    </source>
</reference>
<reference evidence="4" key="2">
    <citation type="submission" date="2003-07" db="UniProtKB">
        <title>Proteome analysis of rice anther.</title>
        <authorList>
            <person name="Hosseini Salekdeh S.G."/>
            <person name="Bennett J."/>
        </authorList>
    </citation>
    <scope>PROTEIN SEQUENCE OF 49-62</scope>
    <source>
        <strain evidence="3">cv. IR64</strain>
        <tissue evidence="3">Anther</tissue>
    </source>
</reference>
<comment type="miscellaneous">
    <text evidence="3">On the 2D-gel the determined pI of this unknown protein is: 7.1, its MW is: 19 kDa.</text>
</comment>
<evidence type="ECO:0000255" key="1"/>
<evidence type="ECO:0000269" key="2">
    <source>
    </source>
</evidence>
<evidence type="ECO:0000269" key="3">
    <source ref="2"/>
</evidence>
<evidence type="ECO:0000305" key="4"/>
<evidence type="ECO:0000312" key="5">
    <source>
        <dbReference type="EMBL" id="EAZ09050.1"/>
    </source>
</evidence>